<protein>
    <recommendedName>
        <fullName>Oxysterol-binding protein 11</fullName>
    </recommendedName>
    <alternativeName>
        <fullName>OSBPk</fullName>
    </alternativeName>
</protein>
<evidence type="ECO:0000255" key="1"/>
<evidence type="ECO:0000256" key="2">
    <source>
        <dbReference type="SAM" id="MobiDB-lite"/>
    </source>
</evidence>
<evidence type="ECO:0000305" key="3"/>
<feature type="chain" id="PRO_0000328472" description="Oxysterol-binding protein 11">
    <location>
        <begin position="1"/>
        <end position="571"/>
    </location>
</feature>
<feature type="region of interest" description="Disordered" evidence="2">
    <location>
        <begin position="1"/>
        <end position="73"/>
    </location>
</feature>
<feature type="coiled-coil region" evidence="1">
    <location>
        <begin position="387"/>
        <end position="420"/>
    </location>
</feature>
<feature type="compositionally biased region" description="Polar residues" evidence="2">
    <location>
        <begin position="33"/>
        <end position="42"/>
    </location>
</feature>
<feature type="compositionally biased region" description="Low complexity" evidence="2">
    <location>
        <begin position="43"/>
        <end position="54"/>
    </location>
</feature>
<reference key="1">
    <citation type="journal article" date="2005" name="Nature">
        <title>The genome of the social amoeba Dictyostelium discoideum.</title>
        <authorList>
            <person name="Eichinger L."/>
            <person name="Pachebat J.A."/>
            <person name="Gloeckner G."/>
            <person name="Rajandream M.A."/>
            <person name="Sucgang R."/>
            <person name="Berriman M."/>
            <person name="Song J."/>
            <person name="Olsen R."/>
            <person name="Szafranski K."/>
            <person name="Xu Q."/>
            <person name="Tunggal B."/>
            <person name="Kummerfeld S."/>
            <person name="Madera M."/>
            <person name="Konfortov B.A."/>
            <person name="Rivero F."/>
            <person name="Bankier A.T."/>
            <person name="Lehmann R."/>
            <person name="Hamlin N."/>
            <person name="Davies R."/>
            <person name="Gaudet P."/>
            <person name="Fey P."/>
            <person name="Pilcher K."/>
            <person name="Chen G."/>
            <person name="Saunders D."/>
            <person name="Sodergren E.J."/>
            <person name="Davis P."/>
            <person name="Kerhornou A."/>
            <person name="Nie X."/>
            <person name="Hall N."/>
            <person name="Anjard C."/>
            <person name="Hemphill L."/>
            <person name="Bason N."/>
            <person name="Farbrother P."/>
            <person name="Desany B."/>
            <person name="Just E."/>
            <person name="Morio T."/>
            <person name="Rost R."/>
            <person name="Churcher C.M."/>
            <person name="Cooper J."/>
            <person name="Haydock S."/>
            <person name="van Driessche N."/>
            <person name="Cronin A."/>
            <person name="Goodhead I."/>
            <person name="Muzny D.M."/>
            <person name="Mourier T."/>
            <person name="Pain A."/>
            <person name="Lu M."/>
            <person name="Harper D."/>
            <person name="Lindsay R."/>
            <person name="Hauser H."/>
            <person name="James K.D."/>
            <person name="Quiles M."/>
            <person name="Madan Babu M."/>
            <person name="Saito T."/>
            <person name="Buchrieser C."/>
            <person name="Wardroper A."/>
            <person name="Felder M."/>
            <person name="Thangavelu M."/>
            <person name="Johnson D."/>
            <person name="Knights A."/>
            <person name="Loulseged H."/>
            <person name="Mungall K.L."/>
            <person name="Oliver K."/>
            <person name="Price C."/>
            <person name="Quail M.A."/>
            <person name="Urushihara H."/>
            <person name="Hernandez J."/>
            <person name="Rabbinowitsch E."/>
            <person name="Steffen D."/>
            <person name="Sanders M."/>
            <person name="Ma J."/>
            <person name="Kohara Y."/>
            <person name="Sharp S."/>
            <person name="Simmonds M.N."/>
            <person name="Spiegler S."/>
            <person name="Tivey A."/>
            <person name="Sugano S."/>
            <person name="White B."/>
            <person name="Walker D."/>
            <person name="Woodward J.R."/>
            <person name="Winckler T."/>
            <person name="Tanaka Y."/>
            <person name="Shaulsky G."/>
            <person name="Schleicher M."/>
            <person name="Weinstock G.M."/>
            <person name="Rosenthal A."/>
            <person name="Cox E.C."/>
            <person name="Chisholm R.L."/>
            <person name="Gibbs R.A."/>
            <person name="Loomis W.F."/>
            <person name="Platzer M."/>
            <person name="Kay R.R."/>
            <person name="Williams J.G."/>
            <person name="Dear P.H."/>
            <person name="Noegel A.A."/>
            <person name="Barrell B.G."/>
            <person name="Kuspa A."/>
        </authorList>
    </citation>
    <scope>NUCLEOTIDE SEQUENCE [LARGE SCALE GENOMIC DNA]</scope>
    <source>
        <strain>AX4</strain>
    </source>
</reference>
<proteinExistence type="inferred from homology"/>
<name>OSB11_DICDI</name>
<keyword id="KW-0175">Coiled coil</keyword>
<keyword id="KW-1185">Reference proteome</keyword>
<sequence length="571" mass="65946">MSNFFKKLVKKDGTPKSSRKSKSESPVGKYDMNGNQVVPDTASSYSDDSNSLSDSYDKRGEPNIGEQIDTLDDYNFGNEIGDAESAPEDKKSLWKKVGGLVGKDPMSLVSLPVYFFEPLTVLECQLEPLRFVELIEKASTCSDSIDRLMYLTAFNIAVFSSYTRTAKPFNPLLGETFEYIDKQGRYKSFCEQVSHHPPIGIAQTTSEIFDLQQESWITTKFWGNSLDVFSHGQNHLYLNSTGEHFTWKVPSAICHNIIFGKMWIEHYGDLIVENHNTGEKAIINFQKSGWFEGTQRKVQGEILDSKGNARVHINGKWDKYVKAKKHSEGPSRKSSGEITLWEATIEPPENFNKWKHGKWIQGLNEMSKEYQAVLPSTDSRVRMDRIYLEREENKLANKEKNKIEEREREKRKTRESRKEIWKPNYFSKREDSKYGYRWDFNGKYWDERDKRVDSVVDKFKNDPNFDSNKIPEYDDSKLNISVKSVRKFSRDFTNSSTPTQLKRSFSKLKLEEQPQSQSLPPMIKEELSSSTVDHEETFYSESNEAKLESIKEDANSHTYIYSSPTIGHSGR</sequence>
<dbReference type="EMBL" id="AAFI02000125">
    <property type="protein sequence ID" value="EAL63030.1"/>
    <property type="molecule type" value="Genomic_DNA"/>
</dbReference>
<dbReference type="RefSeq" id="XP_636540.1">
    <property type="nucleotide sequence ID" value="XM_631448.1"/>
</dbReference>
<dbReference type="SMR" id="Q54ID7"/>
<dbReference type="FunCoup" id="Q54ID7">
    <property type="interactions" value="67"/>
</dbReference>
<dbReference type="PaxDb" id="44689-DDB0237799"/>
<dbReference type="EnsemblProtists" id="EAL63030">
    <property type="protein sequence ID" value="EAL63030"/>
    <property type="gene ID" value="DDB_G0288817"/>
</dbReference>
<dbReference type="GeneID" id="8626825"/>
<dbReference type="KEGG" id="ddi:DDB_G0288817"/>
<dbReference type="dictyBase" id="DDB_G0288817">
    <property type="gene designation" value="osbK"/>
</dbReference>
<dbReference type="VEuPathDB" id="AmoebaDB:DDB_G0288817"/>
<dbReference type="eggNOG" id="KOG1737">
    <property type="taxonomic scope" value="Eukaryota"/>
</dbReference>
<dbReference type="HOGENOM" id="CLU_477718_0_0_1"/>
<dbReference type="InParanoid" id="Q54ID7"/>
<dbReference type="OMA" id="RPSNCNE"/>
<dbReference type="PhylomeDB" id="Q54ID7"/>
<dbReference type="Reactome" id="R-DDI-192105">
    <property type="pathway name" value="Synthesis of bile acids and bile salts"/>
</dbReference>
<dbReference type="PRO" id="PR:Q54ID7"/>
<dbReference type="Proteomes" id="UP000002195">
    <property type="component" value="Chromosome 5"/>
</dbReference>
<dbReference type="GO" id="GO:0005829">
    <property type="term" value="C:cytosol"/>
    <property type="evidence" value="ECO:0000318"/>
    <property type="project" value="GO_Central"/>
</dbReference>
<dbReference type="GO" id="GO:0016020">
    <property type="term" value="C:membrane"/>
    <property type="evidence" value="ECO:0000318"/>
    <property type="project" value="GO_Central"/>
</dbReference>
<dbReference type="GO" id="GO:0032934">
    <property type="term" value="F:sterol binding"/>
    <property type="evidence" value="ECO:0000318"/>
    <property type="project" value="GO_Central"/>
</dbReference>
<dbReference type="FunFam" id="3.30.70.3490:FF:000039">
    <property type="match status" value="1"/>
</dbReference>
<dbReference type="FunFam" id="2.40.160.120:FF:000001">
    <property type="entry name" value="Oxysterol-binding protein"/>
    <property type="match status" value="1"/>
</dbReference>
<dbReference type="Gene3D" id="2.40.160.120">
    <property type="match status" value="1"/>
</dbReference>
<dbReference type="Gene3D" id="3.30.70.3490">
    <property type="match status" value="1"/>
</dbReference>
<dbReference type="InterPro" id="IPR037239">
    <property type="entry name" value="OSBP_sf"/>
</dbReference>
<dbReference type="InterPro" id="IPR000648">
    <property type="entry name" value="Oxysterol-bd"/>
</dbReference>
<dbReference type="PANTHER" id="PTHR10972:SF202">
    <property type="entry name" value="OXYSTEROL-BINDING PROTEIN 11"/>
    <property type="match status" value="1"/>
</dbReference>
<dbReference type="PANTHER" id="PTHR10972">
    <property type="entry name" value="OXYSTEROL-BINDING PROTEIN-RELATED"/>
    <property type="match status" value="1"/>
</dbReference>
<dbReference type="Pfam" id="PF01237">
    <property type="entry name" value="Oxysterol_BP"/>
    <property type="match status" value="1"/>
</dbReference>
<dbReference type="SUPFAM" id="SSF144000">
    <property type="entry name" value="Oxysterol-binding protein-like"/>
    <property type="match status" value="1"/>
</dbReference>
<dbReference type="PROSITE" id="PS01013">
    <property type="entry name" value="OSBP"/>
    <property type="match status" value="1"/>
</dbReference>
<organism>
    <name type="scientific">Dictyostelium discoideum</name>
    <name type="common">Social amoeba</name>
    <dbReference type="NCBI Taxonomy" id="44689"/>
    <lineage>
        <taxon>Eukaryota</taxon>
        <taxon>Amoebozoa</taxon>
        <taxon>Evosea</taxon>
        <taxon>Eumycetozoa</taxon>
        <taxon>Dictyostelia</taxon>
        <taxon>Dictyosteliales</taxon>
        <taxon>Dictyosteliaceae</taxon>
        <taxon>Dictyostelium</taxon>
    </lineage>
</organism>
<gene>
    <name type="primary">osbK</name>
    <name type="ORF">DDB_G0288817</name>
</gene>
<comment type="similarity">
    <text evidence="3">Belongs to the OSBP family.</text>
</comment>
<accession>Q54ID7</accession>